<accession>Q32AE5</accession>
<keyword id="KW-0489">Methyltransferase</keyword>
<keyword id="KW-1185">Reference proteome</keyword>
<keyword id="KW-0949">S-adenosyl-L-methionine</keyword>
<keyword id="KW-0808">Transferase</keyword>
<keyword id="KW-0819">tRNA processing</keyword>
<dbReference type="EC" id="2.1.1.-" evidence="1"/>
<dbReference type="EC" id="2.1.1.35" evidence="1"/>
<dbReference type="EMBL" id="CP000034">
    <property type="protein sequence ID" value="ABB63710.1"/>
    <property type="molecule type" value="Genomic_DNA"/>
</dbReference>
<dbReference type="RefSeq" id="WP_000187007.1">
    <property type="nucleotide sequence ID" value="NC_007606.1"/>
</dbReference>
<dbReference type="RefSeq" id="YP_405201.1">
    <property type="nucleotide sequence ID" value="NC_007606.1"/>
</dbReference>
<dbReference type="SMR" id="Q32AE5"/>
<dbReference type="STRING" id="300267.SDY_3763"/>
<dbReference type="EnsemblBacteria" id="ABB63710">
    <property type="protein sequence ID" value="ABB63710"/>
    <property type="gene ID" value="SDY_3763"/>
</dbReference>
<dbReference type="KEGG" id="sdy:SDY_3763"/>
<dbReference type="PATRIC" id="fig|300267.13.peg.4450"/>
<dbReference type="HOGENOM" id="CLU_043022_0_0_6"/>
<dbReference type="Proteomes" id="UP000002716">
    <property type="component" value="Chromosome"/>
</dbReference>
<dbReference type="GO" id="GO:0005829">
    <property type="term" value="C:cytosol"/>
    <property type="evidence" value="ECO:0007669"/>
    <property type="project" value="TreeGrafter"/>
</dbReference>
<dbReference type="GO" id="GO:0019843">
    <property type="term" value="F:rRNA binding"/>
    <property type="evidence" value="ECO:0007669"/>
    <property type="project" value="TreeGrafter"/>
</dbReference>
<dbReference type="GO" id="GO:0030697">
    <property type="term" value="F:tRNA (uracil(54)-C5)-methyltransferase activity, S-adenosyl methionine-dependent"/>
    <property type="evidence" value="ECO:0007669"/>
    <property type="project" value="UniProtKB-UniRule"/>
</dbReference>
<dbReference type="GO" id="GO:0000049">
    <property type="term" value="F:tRNA binding"/>
    <property type="evidence" value="ECO:0007669"/>
    <property type="project" value="TreeGrafter"/>
</dbReference>
<dbReference type="GO" id="GO:0030488">
    <property type="term" value="P:tRNA methylation"/>
    <property type="evidence" value="ECO:0007669"/>
    <property type="project" value="UniProtKB-UniRule"/>
</dbReference>
<dbReference type="CDD" id="cd02440">
    <property type="entry name" value="AdoMet_MTases"/>
    <property type="match status" value="1"/>
</dbReference>
<dbReference type="FunFam" id="2.40.50.1070:FF:000001">
    <property type="entry name" value="tRNA/tmRNA (uracil-C(5))-methyltransferase"/>
    <property type="match status" value="1"/>
</dbReference>
<dbReference type="FunFam" id="3.40.50.150:FF:000012">
    <property type="entry name" value="tRNA/tmRNA (uracil-C(5))-methyltransferase"/>
    <property type="match status" value="1"/>
</dbReference>
<dbReference type="Gene3D" id="2.40.50.1070">
    <property type="match status" value="1"/>
</dbReference>
<dbReference type="Gene3D" id="3.40.50.150">
    <property type="entry name" value="Vaccinia Virus protein VP39"/>
    <property type="match status" value="1"/>
</dbReference>
<dbReference type="HAMAP" id="MF_01011">
    <property type="entry name" value="RNA_methyltr_TrmA"/>
    <property type="match status" value="1"/>
</dbReference>
<dbReference type="InterPro" id="IPR030390">
    <property type="entry name" value="MeTrfase_TrmA_AS"/>
</dbReference>
<dbReference type="InterPro" id="IPR030391">
    <property type="entry name" value="MeTrfase_TrmA_CS"/>
</dbReference>
<dbReference type="InterPro" id="IPR029063">
    <property type="entry name" value="SAM-dependent_MTases_sf"/>
</dbReference>
<dbReference type="InterPro" id="IPR011869">
    <property type="entry name" value="TrmA_MeTrfase"/>
</dbReference>
<dbReference type="InterPro" id="IPR010280">
    <property type="entry name" value="U5_MeTrfase_fam"/>
</dbReference>
<dbReference type="NCBIfam" id="TIGR02143">
    <property type="entry name" value="trmA_only"/>
    <property type="match status" value="1"/>
</dbReference>
<dbReference type="PANTHER" id="PTHR47790">
    <property type="entry name" value="TRNA/TMRNA (URACIL-C(5))-METHYLTRANSFERASE"/>
    <property type="match status" value="1"/>
</dbReference>
<dbReference type="PANTHER" id="PTHR47790:SF2">
    <property type="entry name" value="TRNA_TMRNA (URACIL-C(5))-METHYLTRANSFERASE"/>
    <property type="match status" value="1"/>
</dbReference>
<dbReference type="Pfam" id="PF05958">
    <property type="entry name" value="tRNA_U5-meth_tr"/>
    <property type="match status" value="1"/>
</dbReference>
<dbReference type="SUPFAM" id="SSF53335">
    <property type="entry name" value="S-adenosyl-L-methionine-dependent methyltransferases"/>
    <property type="match status" value="1"/>
</dbReference>
<dbReference type="PROSITE" id="PS51687">
    <property type="entry name" value="SAM_MT_RNA_M5U"/>
    <property type="match status" value="1"/>
</dbReference>
<dbReference type="PROSITE" id="PS01230">
    <property type="entry name" value="TRMA_1"/>
    <property type="match status" value="1"/>
</dbReference>
<dbReference type="PROSITE" id="PS01231">
    <property type="entry name" value="TRMA_2"/>
    <property type="match status" value="1"/>
</dbReference>
<reference key="1">
    <citation type="journal article" date="2005" name="Nucleic Acids Res.">
        <title>Genome dynamics and diversity of Shigella species, the etiologic agents of bacillary dysentery.</title>
        <authorList>
            <person name="Yang F."/>
            <person name="Yang J."/>
            <person name="Zhang X."/>
            <person name="Chen L."/>
            <person name="Jiang Y."/>
            <person name="Yan Y."/>
            <person name="Tang X."/>
            <person name="Wang J."/>
            <person name="Xiong Z."/>
            <person name="Dong J."/>
            <person name="Xue Y."/>
            <person name="Zhu Y."/>
            <person name="Xu X."/>
            <person name="Sun L."/>
            <person name="Chen S."/>
            <person name="Nie H."/>
            <person name="Peng J."/>
            <person name="Xu J."/>
            <person name="Wang Y."/>
            <person name="Yuan Z."/>
            <person name="Wen Y."/>
            <person name="Yao Z."/>
            <person name="Shen Y."/>
            <person name="Qiang B."/>
            <person name="Hou Y."/>
            <person name="Yu J."/>
            <person name="Jin Q."/>
        </authorList>
    </citation>
    <scope>NUCLEOTIDE SEQUENCE [LARGE SCALE GENOMIC DNA]</scope>
    <source>
        <strain>Sd197</strain>
    </source>
</reference>
<gene>
    <name evidence="1" type="primary">trmA</name>
    <name type="ordered locus">SDY_3763</name>
</gene>
<comment type="function">
    <text evidence="1">Dual-specificity methyltransferase that catalyzes the formation of 5-methyluridine at position 54 (m5U54) in all tRNAs, and that of position 341 (m5U341) in tmRNA (transfer-mRNA).</text>
</comment>
<comment type="catalytic activity">
    <reaction evidence="1">
        <text>uridine(54) in tRNA + S-adenosyl-L-methionine = 5-methyluridine(54) in tRNA + S-adenosyl-L-homocysteine + H(+)</text>
        <dbReference type="Rhea" id="RHEA:42712"/>
        <dbReference type="Rhea" id="RHEA-COMP:10167"/>
        <dbReference type="Rhea" id="RHEA-COMP:10193"/>
        <dbReference type="ChEBI" id="CHEBI:15378"/>
        <dbReference type="ChEBI" id="CHEBI:57856"/>
        <dbReference type="ChEBI" id="CHEBI:59789"/>
        <dbReference type="ChEBI" id="CHEBI:65315"/>
        <dbReference type="ChEBI" id="CHEBI:74447"/>
        <dbReference type="EC" id="2.1.1.35"/>
    </reaction>
</comment>
<comment type="catalytic activity">
    <reaction evidence="1">
        <text>uridine(341) in tmRNA + S-adenosyl-L-methionine = 5-methyluridine(341) in tmRNA + S-adenosyl-L-homocysteine + H(+)</text>
        <dbReference type="Rhea" id="RHEA:43612"/>
        <dbReference type="Rhea" id="RHEA-COMP:10630"/>
        <dbReference type="Rhea" id="RHEA-COMP:10631"/>
        <dbReference type="ChEBI" id="CHEBI:15378"/>
        <dbReference type="ChEBI" id="CHEBI:57856"/>
        <dbReference type="ChEBI" id="CHEBI:59789"/>
        <dbReference type="ChEBI" id="CHEBI:65315"/>
        <dbReference type="ChEBI" id="CHEBI:74447"/>
    </reaction>
</comment>
<comment type="similarity">
    <text evidence="1">Belongs to the class I-like SAM-binding methyltransferase superfamily. RNA M5U methyltransferase family. TrmA subfamily.</text>
</comment>
<feature type="chain" id="PRO_0000281465" description="tRNA/tmRNA (uracil-C(5))-methyltransferase">
    <location>
        <begin position="1"/>
        <end position="366"/>
    </location>
</feature>
<feature type="active site" description="Nucleophile" evidence="1">
    <location>
        <position position="324"/>
    </location>
</feature>
<feature type="active site" description="Proton acceptor" evidence="1">
    <location>
        <position position="358"/>
    </location>
</feature>
<feature type="binding site" evidence="1">
    <location>
        <position position="190"/>
    </location>
    <ligand>
        <name>S-adenosyl-L-methionine</name>
        <dbReference type="ChEBI" id="CHEBI:59789"/>
    </ligand>
</feature>
<feature type="binding site" evidence="1">
    <location>
        <position position="218"/>
    </location>
    <ligand>
        <name>S-adenosyl-L-methionine</name>
        <dbReference type="ChEBI" id="CHEBI:59789"/>
    </ligand>
</feature>
<feature type="binding site" evidence="1">
    <location>
        <position position="223"/>
    </location>
    <ligand>
        <name>S-adenosyl-L-methionine</name>
        <dbReference type="ChEBI" id="CHEBI:59789"/>
    </ligand>
</feature>
<feature type="binding site" evidence="1">
    <location>
        <position position="239"/>
    </location>
    <ligand>
        <name>S-adenosyl-L-methionine</name>
        <dbReference type="ChEBI" id="CHEBI:59789"/>
    </ligand>
</feature>
<feature type="binding site" evidence="1">
    <location>
        <position position="299"/>
    </location>
    <ligand>
        <name>S-adenosyl-L-methionine</name>
        <dbReference type="ChEBI" id="CHEBI:59789"/>
    </ligand>
</feature>
<name>TRMA_SHIDS</name>
<sequence>MTPEHLPTEQYEAQLAEKVVRLQSMMAPFSDLVPEVFRSPVSHYRMRAEFRIWHDGDDLYHIIFDQQTKSRIRVDSFPAASELINQLMTAMIAGVRNNPVLRHKLFQIDYLTTLSNQAVVSLLYHKKLDDEWRQEAEALRDALRAQNLNVHLIGRATKTKIALDQDYIDERLPVAGKEMIYRQVENSFTQPNAAMNIQMLEWALDVTKGSKGDLLELYCGNGNFSLALAHNFDRVLATEIAKPSVAAAQYNIAANHIDNVQIIRMAAEEFTQAMNGVREFNRLQGIDLKSYQCETIFVDPPRSGLDSETEKMVQAYPRILYISCNPETLCKNLETLSQTHKVERLALFDQFPYTHHMECGVLLTAK</sequence>
<evidence type="ECO:0000255" key="1">
    <source>
        <dbReference type="HAMAP-Rule" id="MF_01011"/>
    </source>
</evidence>
<protein>
    <recommendedName>
        <fullName evidence="1">tRNA/tmRNA (uracil-C(5))-methyltransferase</fullName>
        <ecNumber evidence="1">2.1.1.-</ecNumber>
        <ecNumber evidence="1">2.1.1.35</ecNumber>
    </recommendedName>
    <alternativeName>
        <fullName evidence="1">tRNA (uracil(54)-C(5))-methyltransferase</fullName>
    </alternativeName>
    <alternativeName>
        <fullName evidence="1">tRNA(m5U54)-methyltransferase</fullName>
        <shortName evidence="1">RUMT</shortName>
    </alternativeName>
    <alternativeName>
        <fullName evidence="1">tmRNA (uracil(341)-C(5))-methyltransferase</fullName>
    </alternativeName>
</protein>
<organism>
    <name type="scientific">Shigella dysenteriae serotype 1 (strain Sd197)</name>
    <dbReference type="NCBI Taxonomy" id="300267"/>
    <lineage>
        <taxon>Bacteria</taxon>
        <taxon>Pseudomonadati</taxon>
        <taxon>Pseudomonadota</taxon>
        <taxon>Gammaproteobacteria</taxon>
        <taxon>Enterobacterales</taxon>
        <taxon>Enterobacteriaceae</taxon>
        <taxon>Shigella</taxon>
    </lineage>
</organism>
<proteinExistence type="inferred from homology"/>